<protein>
    <recommendedName>
        <fullName evidence="1">Large ribosomal subunit protein bL31</fullName>
    </recommendedName>
    <alternativeName>
        <fullName evidence="2">50S ribosomal protein L31</fullName>
    </alternativeName>
</protein>
<evidence type="ECO:0000255" key="1">
    <source>
        <dbReference type="HAMAP-Rule" id="MF_00501"/>
    </source>
</evidence>
<evidence type="ECO:0000305" key="2"/>
<feature type="chain" id="PRO_0000173089" description="Large ribosomal subunit protein bL31">
    <location>
        <begin position="1"/>
        <end position="69"/>
    </location>
</feature>
<feature type="binding site" evidence="1">
    <location>
        <position position="16"/>
    </location>
    <ligand>
        <name>Zn(2+)</name>
        <dbReference type="ChEBI" id="CHEBI:29105"/>
    </ligand>
</feature>
<feature type="binding site" evidence="1">
    <location>
        <position position="18"/>
    </location>
    <ligand>
        <name>Zn(2+)</name>
        <dbReference type="ChEBI" id="CHEBI:29105"/>
    </ligand>
</feature>
<feature type="binding site" evidence="1">
    <location>
        <position position="37"/>
    </location>
    <ligand>
        <name>Zn(2+)</name>
        <dbReference type="ChEBI" id="CHEBI:29105"/>
    </ligand>
</feature>
<feature type="binding site" evidence="1">
    <location>
        <position position="40"/>
    </location>
    <ligand>
        <name>Zn(2+)</name>
        <dbReference type="ChEBI" id="CHEBI:29105"/>
    </ligand>
</feature>
<name>RL31_BUCBP</name>
<comment type="function">
    <text evidence="1">Binds the 23S rRNA.</text>
</comment>
<comment type="cofactor">
    <cofactor evidence="1">
        <name>Zn(2+)</name>
        <dbReference type="ChEBI" id="CHEBI:29105"/>
    </cofactor>
    <text evidence="1">Binds 1 zinc ion per subunit.</text>
</comment>
<comment type="subunit">
    <text evidence="1">Part of the 50S ribosomal subunit.</text>
</comment>
<comment type="similarity">
    <text evidence="1">Belongs to the bacterial ribosomal protein bL31 family. Type A subfamily.</text>
</comment>
<reference key="1">
    <citation type="journal article" date="2003" name="Proc. Natl. Acad. Sci. U.S.A.">
        <title>Reductive genome evolution in Buchnera aphidicola.</title>
        <authorList>
            <person name="van Ham R.C.H.J."/>
            <person name="Kamerbeek J."/>
            <person name="Palacios C."/>
            <person name="Rausell C."/>
            <person name="Abascal F."/>
            <person name="Bastolla U."/>
            <person name="Fernandez J.M."/>
            <person name="Jimenez L."/>
            <person name="Postigo M."/>
            <person name="Silva F.J."/>
            <person name="Tamames J."/>
            <person name="Viguera E."/>
            <person name="Latorre A."/>
            <person name="Valencia A."/>
            <person name="Moran F."/>
            <person name="Moya A."/>
        </authorList>
    </citation>
    <scope>NUCLEOTIDE SEQUENCE [LARGE SCALE GENOMIC DNA]</scope>
    <source>
        <strain>Bp</strain>
    </source>
</reference>
<gene>
    <name evidence="1" type="primary">rpmE</name>
    <name type="ordered locus">bbp_522</name>
</gene>
<keyword id="KW-0479">Metal-binding</keyword>
<keyword id="KW-1185">Reference proteome</keyword>
<keyword id="KW-0687">Ribonucleoprotein</keyword>
<keyword id="KW-0689">Ribosomal protein</keyword>
<keyword id="KW-0694">RNA-binding</keyword>
<keyword id="KW-0699">rRNA-binding</keyword>
<keyword id="KW-0862">Zinc</keyword>
<organism>
    <name type="scientific">Buchnera aphidicola subsp. Baizongia pistaciae (strain Bp)</name>
    <dbReference type="NCBI Taxonomy" id="224915"/>
    <lineage>
        <taxon>Bacteria</taxon>
        <taxon>Pseudomonadati</taxon>
        <taxon>Pseudomonadota</taxon>
        <taxon>Gammaproteobacteria</taxon>
        <taxon>Enterobacterales</taxon>
        <taxon>Erwiniaceae</taxon>
        <taxon>Buchnera</taxon>
    </lineage>
</organism>
<sequence length="69" mass="7936">MKKKIHPDYFKINVTCSCGNNINIFSTLSKNINVDVCSKCHPFYTGQQRTSDTGGRIEKFHKRFNISSH</sequence>
<dbReference type="EMBL" id="AE016826">
    <property type="protein sequence ID" value="AAO27224.1"/>
    <property type="molecule type" value="Genomic_DNA"/>
</dbReference>
<dbReference type="RefSeq" id="WP_011091625.1">
    <property type="nucleotide sequence ID" value="NC_004545.1"/>
</dbReference>
<dbReference type="SMR" id="Q89A32"/>
<dbReference type="STRING" id="224915.bbp_522"/>
<dbReference type="KEGG" id="bab:bbp_522"/>
<dbReference type="eggNOG" id="COG0254">
    <property type="taxonomic scope" value="Bacteria"/>
</dbReference>
<dbReference type="HOGENOM" id="CLU_114306_4_0_6"/>
<dbReference type="OrthoDB" id="9803251at2"/>
<dbReference type="Proteomes" id="UP000000601">
    <property type="component" value="Chromosome"/>
</dbReference>
<dbReference type="GO" id="GO:1990904">
    <property type="term" value="C:ribonucleoprotein complex"/>
    <property type="evidence" value="ECO:0007669"/>
    <property type="project" value="UniProtKB-KW"/>
</dbReference>
<dbReference type="GO" id="GO:0005840">
    <property type="term" value="C:ribosome"/>
    <property type="evidence" value="ECO:0007669"/>
    <property type="project" value="UniProtKB-KW"/>
</dbReference>
<dbReference type="GO" id="GO:0046872">
    <property type="term" value="F:metal ion binding"/>
    <property type="evidence" value="ECO:0007669"/>
    <property type="project" value="UniProtKB-KW"/>
</dbReference>
<dbReference type="GO" id="GO:0019843">
    <property type="term" value="F:rRNA binding"/>
    <property type="evidence" value="ECO:0007669"/>
    <property type="project" value="UniProtKB-KW"/>
</dbReference>
<dbReference type="GO" id="GO:0003735">
    <property type="term" value="F:structural constituent of ribosome"/>
    <property type="evidence" value="ECO:0007669"/>
    <property type="project" value="InterPro"/>
</dbReference>
<dbReference type="GO" id="GO:0006412">
    <property type="term" value="P:translation"/>
    <property type="evidence" value="ECO:0007669"/>
    <property type="project" value="UniProtKB-UniRule"/>
</dbReference>
<dbReference type="Gene3D" id="4.10.830.30">
    <property type="entry name" value="Ribosomal protein L31"/>
    <property type="match status" value="1"/>
</dbReference>
<dbReference type="HAMAP" id="MF_00501">
    <property type="entry name" value="Ribosomal_bL31_1"/>
    <property type="match status" value="1"/>
</dbReference>
<dbReference type="InterPro" id="IPR034704">
    <property type="entry name" value="Ribosomal_bL28/bL31-like_sf"/>
</dbReference>
<dbReference type="InterPro" id="IPR002150">
    <property type="entry name" value="Ribosomal_bL31"/>
</dbReference>
<dbReference type="InterPro" id="IPR027491">
    <property type="entry name" value="Ribosomal_bL31_A"/>
</dbReference>
<dbReference type="InterPro" id="IPR042105">
    <property type="entry name" value="Ribosomal_bL31_sf"/>
</dbReference>
<dbReference type="NCBIfam" id="TIGR00105">
    <property type="entry name" value="L31"/>
    <property type="match status" value="1"/>
</dbReference>
<dbReference type="NCBIfam" id="NF000612">
    <property type="entry name" value="PRK00019.1"/>
    <property type="match status" value="1"/>
</dbReference>
<dbReference type="NCBIfam" id="NF001809">
    <property type="entry name" value="PRK00528.1"/>
    <property type="match status" value="1"/>
</dbReference>
<dbReference type="PANTHER" id="PTHR33280">
    <property type="entry name" value="50S RIBOSOMAL PROTEIN L31, CHLOROPLASTIC"/>
    <property type="match status" value="1"/>
</dbReference>
<dbReference type="PANTHER" id="PTHR33280:SF6">
    <property type="entry name" value="LARGE RIBOSOMAL SUBUNIT PROTEIN BL31A"/>
    <property type="match status" value="1"/>
</dbReference>
<dbReference type="Pfam" id="PF01197">
    <property type="entry name" value="Ribosomal_L31"/>
    <property type="match status" value="1"/>
</dbReference>
<dbReference type="PRINTS" id="PR01249">
    <property type="entry name" value="RIBOSOMALL31"/>
</dbReference>
<dbReference type="SUPFAM" id="SSF143800">
    <property type="entry name" value="L28p-like"/>
    <property type="match status" value="1"/>
</dbReference>
<dbReference type="PROSITE" id="PS01143">
    <property type="entry name" value="RIBOSOMAL_L31"/>
    <property type="match status" value="1"/>
</dbReference>
<accession>Q89A32</accession>
<proteinExistence type="inferred from homology"/>